<protein>
    <recommendedName>
        <fullName evidence="1">Tyrosine recombinase XerD</fullName>
    </recommendedName>
</protein>
<sequence>MTQAAPETLPLPPSSTEAIQRFCDALWLEDGLARNTLDAYRRDLTLYAQWLAGRGKALDQTEDVDLSDYFAARHEDSLASTANRRRTVFKRFFQWALREHLVSADPTRLLSTAKQPPRVPKTLSEAQVEALIAAPDVDAPLGLRDRAMIELMYASGLRVSEIVALKTVEVGLNEGVVRVIGGKGGKDRLVPFGAEAGDWLRRYLRDGRTALLGERTADALFVTARGDGMTRQAFWYLIKRYAQRADIHAPLSPHTLRHAFATHLLNHGADLRVVQMLLGHADISTTQIYTHVARERLRTLHAQHHPRG</sequence>
<reference key="1">
    <citation type="journal article" date="2002" name="Nature">
        <title>Genome sequence of the plant pathogen Ralstonia solanacearum.</title>
        <authorList>
            <person name="Salanoubat M."/>
            <person name="Genin S."/>
            <person name="Artiguenave F."/>
            <person name="Gouzy J."/>
            <person name="Mangenot S."/>
            <person name="Arlat M."/>
            <person name="Billault A."/>
            <person name="Brottier P."/>
            <person name="Camus J.-C."/>
            <person name="Cattolico L."/>
            <person name="Chandler M."/>
            <person name="Choisne N."/>
            <person name="Claudel-Renard C."/>
            <person name="Cunnac S."/>
            <person name="Demange N."/>
            <person name="Gaspin C."/>
            <person name="Lavie M."/>
            <person name="Moisan A."/>
            <person name="Robert C."/>
            <person name="Saurin W."/>
            <person name="Schiex T."/>
            <person name="Siguier P."/>
            <person name="Thebault P."/>
            <person name="Whalen M."/>
            <person name="Wincker P."/>
            <person name="Levy M."/>
            <person name="Weissenbach J."/>
            <person name="Boucher C.A."/>
        </authorList>
    </citation>
    <scope>NUCLEOTIDE SEQUENCE [LARGE SCALE GENOMIC DNA]</scope>
    <source>
        <strain>ATCC BAA-1114 / GMI1000</strain>
    </source>
</reference>
<organism>
    <name type="scientific">Ralstonia nicotianae (strain ATCC BAA-1114 / GMI1000)</name>
    <name type="common">Ralstonia solanacearum</name>
    <dbReference type="NCBI Taxonomy" id="267608"/>
    <lineage>
        <taxon>Bacteria</taxon>
        <taxon>Pseudomonadati</taxon>
        <taxon>Pseudomonadota</taxon>
        <taxon>Betaproteobacteria</taxon>
        <taxon>Burkholderiales</taxon>
        <taxon>Burkholderiaceae</taxon>
        <taxon>Ralstonia</taxon>
        <taxon>Ralstonia solanacearum species complex</taxon>
    </lineage>
</organism>
<evidence type="ECO:0000255" key="1">
    <source>
        <dbReference type="HAMAP-Rule" id="MF_01807"/>
    </source>
</evidence>
<evidence type="ECO:0000255" key="2">
    <source>
        <dbReference type="PROSITE-ProRule" id="PRU01246"/>
    </source>
</evidence>
<evidence type="ECO:0000255" key="3">
    <source>
        <dbReference type="PROSITE-ProRule" id="PRU01248"/>
    </source>
</evidence>
<keyword id="KW-0131">Cell cycle</keyword>
<keyword id="KW-0132">Cell division</keyword>
<keyword id="KW-0159">Chromosome partition</keyword>
<keyword id="KW-0963">Cytoplasm</keyword>
<keyword id="KW-0229">DNA integration</keyword>
<keyword id="KW-0233">DNA recombination</keyword>
<keyword id="KW-0238">DNA-binding</keyword>
<keyword id="KW-1185">Reference proteome</keyword>
<proteinExistence type="inferred from homology"/>
<name>XERD_RALN1</name>
<dbReference type="EMBL" id="AL646052">
    <property type="protein sequence ID" value="CAD16251.1"/>
    <property type="molecule type" value="Genomic_DNA"/>
</dbReference>
<dbReference type="RefSeq" id="WP_011002459.1">
    <property type="nucleotide sequence ID" value="NC_003295.1"/>
</dbReference>
<dbReference type="SMR" id="Q8XWD0"/>
<dbReference type="STRING" id="267608.RSc2544"/>
<dbReference type="EnsemblBacteria" id="CAD16251">
    <property type="protein sequence ID" value="CAD16251"/>
    <property type="gene ID" value="RSc2544"/>
</dbReference>
<dbReference type="KEGG" id="rso:RSc2544"/>
<dbReference type="PATRIC" id="fig|267608.8.peg.2586"/>
<dbReference type="eggNOG" id="COG4974">
    <property type="taxonomic scope" value="Bacteria"/>
</dbReference>
<dbReference type="HOGENOM" id="CLU_027562_9_0_4"/>
<dbReference type="Proteomes" id="UP000001436">
    <property type="component" value="Chromosome"/>
</dbReference>
<dbReference type="GO" id="GO:0005737">
    <property type="term" value="C:cytoplasm"/>
    <property type="evidence" value="ECO:0007669"/>
    <property type="project" value="UniProtKB-SubCell"/>
</dbReference>
<dbReference type="GO" id="GO:0003677">
    <property type="term" value="F:DNA binding"/>
    <property type="evidence" value="ECO:0007669"/>
    <property type="project" value="UniProtKB-KW"/>
</dbReference>
<dbReference type="GO" id="GO:0009037">
    <property type="term" value="F:tyrosine-based site-specific recombinase activity"/>
    <property type="evidence" value="ECO:0007669"/>
    <property type="project" value="UniProtKB-UniRule"/>
</dbReference>
<dbReference type="GO" id="GO:0051301">
    <property type="term" value="P:cell division"/>
    <property type="evidence" value="ECO:0007669"/>
    <property type="project" value="UniProtKB-KW"/>
</dbReference>
<dbReference type="GO" id="GO:0007059">
    <property type="term" value="P:chromosome segregation"/>
    <property type="evidence" value="ECO:0007669"/>
    <property type="project" value="UniProtKB-UniRule"/>
</dbReference>
<dbReference type="GO" id="GO:0006313">
    <property type="term" value="P:DNA transposition"/>
    <property type="evidence" value="ECO:0007669"/>
    <property type="project" value="UniProtKB-UniRule"/>
</dbReference>
<dbReference type="CDD" id="cd00798">
    <property type="entry name" value="INT_XerDC_C"/>
    <property type="match status" value="1"/>
</dbReference>
<dbReference type="Gene3D" id="1.10.150.130">
    <property type="match status" value="1"/>
</dbReference>
<dbReference type="Gene3D" id="1.10.443.10">
    <property type="entry name" value="Intergrase catalytic core"/>
    <property type="match status" value="1"/>
</dbReference>
<dbReference type="HAMAP" id="MF_01808">
    <property type="entry name" value="Recomb_XerC_XerD"/>
    <property type="match status" value="1"/>
</dbReference>
<dbReference type="HAMAP" id="MF_01807">
    <property type="entry name" value="Recomb_XerD"/>
    <property type="match status" value="1"/>
</dbReference>
<dbReference type="InterPro" id="IPR044068">
    <property type="entry name" value="CB"/>
</dbReference>
<dbReference type="InterPro" id="IPR011010">
    <property type="entry name" value="DNA_brk_join_enz"/>
</dbReference>
<dbReference type="InterPro" id="IPR013762">
    <property type="entry name" value="Integrase-like_cat_sf"/>
</dbReference>
<dbReference type="InterPro" id="IPR002104">
    <property type="entry name" value="Integrase_catalytic"/>
</dbReference>
<dbReference type="InterPro" id="IPR010998">
    <property type="entry name" value="Integrase_recombinase_N"/>
</dbReference>
<dbReference type="InterPro" id="IPR004107">
    <property type="entry name" value="Integrase_SAM-like_N"/>
</dbReference>
<dbReference type="InterPro" id="IPR011932">
    <property type="entry name" value="Recomb_XerD"/>
</dbReference>
<dbReference type="InterPro" id="IPR023009">
    <property type="entry name" value="Tyrosine_recombinase_XerC/XerD"/>
</dbReference>
<dbReference type="InterPro" id="IPR050090">
    <property type="entry name" value="Tyrosine_recombinase_XerCD"/>
</dbReference>
<dbReference type="NCBIfam" id="NF001399">
    <property type="entry name" value="PRK00283.1"/>
    <property type="match status" value="1"/>
</dbReference>
<dbReference type="NCBIfam" id="TIGR02225">
    <property type="entry name" value="recomb_XerD"/>
    <property type="match status" value="1"/>
</dbReference>
<dbReference type="PANTHER" id="PTHR30349">
    <property type="entry name" value="PHAGE INTEGRASE-RELATED"/>
    <property type="match status" value="1"/>
</dbReference>
<dbReference type="PANTHER" id="PTHR30349:SF90">
    <property type="entry name" value="TYROSINE RECOMBINASE XERD"/>
    <property type="match status" value="1"/>
</dbReference>
<dbReference type="Pfam" id="PF02899">
    <property type="entry name" value="Phage_int_SAM_1"/>
    <property type="match status" value="1"/>
</dbReference>
<dbReference type="Pfam" id="PF00589">
    <property type="entry name" value="Phage_integrase"/>
    <property type="match status" value="1"/>
</dbReference>
<dbReference type="SUPFAM" id="SSF56349">
    <property type="entry name" value="DNA breaking-rejoining enzymes"/>
    <property type="match status" value="1"/>
</dbReference>
<dbReference type="SUPFAM" id="SSF47823">
    <property type="entry name" value="lambda integrase-like, N-terminal domain"/>
    <property type="match status" value="1"/>
</dbReference>
<dbReference type="PROSITE" id="PS51900">
    <property type="entry name" value="CB"/>
    <property type="match status" value="1"/>
</dbReference>
<dbReference type="PROSITE" id="PS51898">
    <property type="entry name" value="TYR_RECOMBINASE"/>
    <property type="match status" value="1"/>
</dbReference>
<feature type="chain" id="PRO_0000095407" description="Tyrosine recombinase XerD">
    <location>
        <begin position="1"/>
        <end position="308"/>
    </location>
</feature>
<feature type="domain" description="Core-binding (CB)" evidence="3">
    <location>
        <begin position="13"/>
        <end position="97"/>
    </location>
</feature>
<feature type="domain" description="Tyr recombinase" evidence="2">
    <location>
        <begin position="118"/>
        <end position="302"/>
    </location>
</feature>
<feature type="active site" evidence="1">
    <location>
        <position position="158"/>
    </location>
</feature>
<feature type="active site" evidence="1">
    <location>
        <position position="183"/>
    </location>
</feature>
<feature type="active site" evidence="1">
    <location>
        <position position="254"/>
    </location>
</feature>
<feature type="active site" evidence="1">
    <location>
        <position position="257"/>
    </location>
</feature>
<feature type="active site" evidence="1">
    <location>
        <position position="280"/>
    </location>
</feature>
<feature type="active site" description="O-(3'-phospho-DNA)-tyrosine intermediate" evidence="1">
    <location>
        <position position="289"/>
    </location>
</feature>
<gene>
    <name evidence="1" type="primary">xerD</name>
    <name type="ordered locus">RSc2544</name>
    <name type="ORF">RS00723</name>
</gene>
<accession>Q8XWD0</accession>
<comment type="function">
    <text evidence="1">Site-specific tyrosine recombinase, which acts by catalyzing the cutting and rejoining of the recombining DNA molecules. The XerC-XerD complex is essential to convert dimers of the bacterial chromosome into monomers to permit their segregation at cell division. It also contributes to the segregational stability of plasmids.</text>
</comment>
<comment type="subunit">
    <text evidence="1">Forms a cyclic heterotetrameric complex composed of two molecules of XerC and two molecules of XerD.</text>
</comment>
<comment type="subcellular location">
    <subcellularLocation>
        <location evidence="1">Cytoplasm</location>
    </subcellularLocation>
</comment>
<comment type="similarity">
    <text evidence="1">Belongs to the 'phage' integrase family. XerD subfamily.</text>
</comment>